<evidence type="ECO:0000255" key="1">
    <source>
        <dbReference type="HAMAP-Rule" id="MF_00503"/>
    </source>
</evidence>
<evidence type="ECO:0000305" key="2"/>
<dbReference type="EMBL" id="CP000802">
    <property type="protein sequence ID" value="ABV08603.1"/>
    <property type="molecule type" value="Genomic_DNA"/>
</dbReference>
<dbReference type="RefSeq" id="WP_001196062.1">
    <property type="nucleotide sequence ID" value="NC_009800.1"/>
</dbReference>
<dbReference type="SMR" id="A8A7U9"/>
<dbReference type="GeneID" id="93777620"/>
<dbReference type="KEGG" id="ecx:EcHS_A4447"/>
<dbReference type="HOGENOM" id="CLU_078938_4_1_6"/>
<dbReference type="GO" id="GO:1990904">
    <property type="term" value="C:ribonucleoprotein complex"/>
    <property type="evidence" value="ECO:0007669"/>
    <property type="project" value="UniProtKB-KW"/>
</dbReference>
<dbReference type="GO" id="GO:0005840">
    <property type="term" value="C:ribosome"/>
    <property type="evidence" value="ECO:0007669"/>
    <property type="project" value="UniProtKB-KW"/>
</dbReference>
<dbReference type="GO" id="GO:0019843">
    <property type="term" value="F:rRNA binding"/>
    <property type="evidence" value="ECO:0007669"/>
    <property type="project" value="UniProtKB-UniRule"/>
</dbReference>
<dbReference type="GO" id="GO:0003735">
    <property type="term" value="F:structural constituent of ribosome"/>
    <property type="evidence" value="ECO:0007669"/>
    <property type="project" value="InterPro"/>
</dbReference>
<dbReference type="GO" id="GO:0006412">
    <property type="term" value="P:translation"/>
    <property type="evidence" value="ECO:0007669"/>
    <property type="project" value="UniProtKB-UniRule"/>
</dbReference>
<dbReference type="FunFam" id="3.10.430.100:FF:000001">
    <property type="entry name" value="50S ribosomal protein L9"/>
    <property type="match status" value="1"/>
</dbReference>
<dbReference type="FunFam" id="3.40.5.10:FF:000001">
    <property type="entry name" value="50S ribosomal protein L9"/>
    <property type="match status" value="1"/>
</dbReference>
<dbReference type="Gene3D" id="3.10.430.100">
    <property type="entry name" value="Ribosomal protein L9, C-terminal domain"/>
    <property type="match status" value="1"/>
</dbReference>
<dbReference type="Gene3D" id="3.40.5.10">
    <property type="entry name" value="Ribosomal protein L9, N-terminal domain"/>
    <property type="match status" value="1"/>
</dbReference>
<dbReference type="HAMAP" id="MF_00503">
    <property type="entry name" value="Ribosomal_bL9"/>
    <property type="match status" value="1"/>
</dbReference>
<dbReference type="InterPro" id="IPR000244">
    <property type="entry name" value="Ribosomal_bL9"/>
</dbReference>
<dbReference type="InterPro" id="IPR009027">
    <property type="entry name" value="Ribosomal_bL9/RNase_H1_N"/>
</dbReference>
<dbReference type="InterPro" id="IPR020594">
    <property type="entry name" value="Ribosomal_bL9_bac/chp"/>
</dbReference>
<dbReference type="InterPro" id="IPR020069">
    <property type="entry name" value="Ribosomal_bL9_C"/>
</dbReference>
<dbReference type="InterPro" id="IPR036791">
    <property type="entry name" value="Ribosomal_bL9_C_sf"/>
</dbReference>
<dbReference type="InterPro" id="IPR020070">
    <property type="entry name" value="Ribosomal_bL9_N"/>
</dbReference>
<dbReference type="InterPro" id="IPR036935">
    <property type="entry name" value="Ribosomal_bL9_N_sf"/>
</dbReference>
<dbReference type="NCBIfam" id="TIGR00158">
    <property type="entry name" value="L9"/>
    <property type="match status" value="1"/>
</dbReference>
<dbReference type="PANTHER" id="PTHR21368">
    <property type="entry name" value="50S RIBOSOMAL PROTEIN L9"/>
    <property type="match status" value="1"/>
</dbReference>
<dbReference type="Pfam" id="PF03948">
    <property type="entry name" value="Ribosomal_L9_C"/>
    <property type="match status" value="1"/>
</dbReference>
<dbReference type="Pfam" id="PF01281">
    <property type="entry name" value="Ribosomal_L9_N"/>
    <property type="match status" value="1"/>
</dbReference>
<dbReference type="SUPFAM" id="SSF55658">
    <property type="entry name" value="L9 N-domain-like"/>
    <property type="match status" value="1"/>
</dbReference>
<dbReference type="SUPFAM" id="SSF55653">
    <property type="entry name" value="Ribosomal protein L9 C-domain"/>
    <property type="match status" value="1"/>
</dbReference>
<dbReference type="PROSITE" id="PS00651">
    <property type="entry name" value="RIBOSOMAL_L9"/>
    <property type="match status" value="1"/>
</dbReference>
<proteinExistence type="inferred from homology"/>
<sequence length="149" mass="15769">MQVILLDKVANLGSLGDQVNVKAGYARNFLVPQGKAVPATKKNIEFFEARRAELEAKLAEVLAAANARAEKINALETVTIASKAGDEGKLFGSIGTRDIADAVTAAGVEVAKSEVRLPNGVLRTTGEHEVSFQVHSEVFAKVIVNVVAE</sequence>
<protein>
    <recommendedName>
        <fullName evidence="1">Large ribosomal subunit protein bL9</fullName>
    </recommendedName>
    <alternativeName>
        <fullName evidence="2">50S ribosomal protein L9</fullName>
    </alternativeName>
</protein>
<comment type="function">
    <text evidence="1">Binds to the 23S rRNA.</text>
</comment>
<comment type="similarity">
    <text evidence="1">Belongs to the bacterial ribosomal protein bL9 family.</text>
</comment>
<name>RL9_ECOHS</name>
<feature type="chain" id="PRO_1000060507" description="Large ribosomal subunit protein bL9">
    <location>
        <begin position="1"/>
        <end position="149"/>
    </location>
</feature>
<feature type="modified residue" description="N6-acetyllysine" evidence="1">
    <location>
        <position position="89"/>
    </location>
</feature>
<gene>
    <name evidence="1" type="primary">rplI</name>
    <name type="ordered locus">EcHS_A4447</name>
</gene>
<keyword id="KW-0007">Acetylation</keyword>
<keyword id="KW-0687">Ribonucleoprotein</keyword>
<keyword id="KW-0689">Ribosomal protein</keyword>
<keyword id="KW-0694">RNA-binding</keyword>
<keyword id="KW-0699">rRNA-binding</keyword>
<reference key="1">
    <citation type="journal article" date="2008" name="J. Bacteriol.">
        <title>The pangenome structure of Escherichia coli: comparative genomic analysis of E. coli commensal and pathogenic isolates.</title>
        <authorList>
            <person name="Rasko D.A."/>
            <person name="Rosovitz M.J."/>
            <person name="Myers G.S.A."/>
            <person name="Mongodin E.F."/>
            <person name="Fricke W.F."/>
            <person name="Gajer P."/>
            <person name="Crabtree J."/>
            <person name="Sebaihia M."/>
            <person name="Thomson N.R."/>
            <person name="Chaudhuri R."/>
            <person name="Henderson I.R."/>
            <person name="Sperandio V."/>
            <person name="Ravel J."/>
        </authorList>
    </citation>
    <scope>NUCLEOTIDE SEQUENCE [LARGE SCALE GENOMIC DNA]</scope>
    <source>
        <strain>HS</strain>
    </source>
</reference>
<accession>A8A7U9</accession>
<organism>
    <name type="scientific">Escherichia coli O9:H4 (strain HS)</name>
    <dbReference type="NCBI Taxonomy" id="331112"/>
    <lineage>
        <taxon>Bacteria</taxon>
        <taxon>Pseudomonadati</taxon>
        <taxon>Pseudomonadota</taxon>
        <taxon>Gammaproteobacteria</taxon>
        <taxon>Enterobacterales</taxon>
        <taxon>Enterobacteriaceae</taxon>
        <taxon>Escherichia</taxon>
    </lineage>
</organism>